<feature type="chain" id="PRO_0000462348" description="Terminase, large subunit">
    <location>
        <begin position="1"/>
        <end position="504"/>
    </location>
</feature>
<feature type="region of interest" description="ATPase activity" evidence="1">
    <location>
        <begin position="1"/>
        <end position="204"/>
    </location>
</feature>
<feature type="region of interest" description="Nuclease activity" evidence="1">
    <location>
        <begin position="326"/>
        <end position="415"/>
    </location>
</feature>
<feature type="short sequence motif" description="Walker A motif" evidence="5">
    <location>
        <begin position="54"/>
        <end position="61"/>
    </location>
</feature>
<feature type="short sequence motif" description="Walker B motif" evidence="5">
    <location>
        <begin position="149"/>
        <end position="154"/>
    </location>
</feature>
<feature type="binding site" evidence="5">
    <location>
        <position position="471"/>
    </location>
    <ligand>
        <name>Mg(2+)</name>
        <dbReference type="ChEBI" id="CHEBI:18420"/>
        <label>1</label>
        <note>catalytic; for nuclease activity</note>
    </ligand>
</feature>
<feature type="mutagenesis site" description="Almost complete loss of ATPase and DNA packaging activities." evidence="2">
    <original>R</original>
    <variation>A</variation>
    <location>
        <position position="56"/>
    </location>
</feature>
<feature type="mutagenesis site" description="Almost complete loss of ATPase and DNA packaging activities." evidence="2">
    <original>K</original>
    <variation>A</variation>
    <location>
        <position position="57"/>
    </location>
</feature>
<feature type="mutagenesis site" description="Almost complete loss of ATPase and DNA packaging activities." evidence="2">
    <original>K</original>
    <variation>A</variation>
    <location>
        <position position="60"/>
    </location>
</feature>
<feature type="mutagenesis site" description="Almost complete loss of ATPase and DNA packaging activities." evidence="2">
    <original>E</original>
    <variation>A</variation>
    <location>
        <position position="154"/>
    </location>
</feature>
<dbReference type="EC" id="3.1.21.-"/>
<dbReference type="EC" id="3.6.4.-"/>
<dbReference type="EMBL" id="AF069529">
    <property type="protein sequence ID" value="AAF31098.1"/>
    <property type="molecule type" value="Genomic_DNA"/>
</dbReference>
<dbReference type="RefSeq" id="NP_037698.1">
    <property type="nucleotide sequence ID" value="NC_002167.1"/>
</dbReference>
<dbReference type="PDB" id="6Z6D">
    <property type="method" value="X-ray"/>
    <property type="resolution" value="2.20 A"/>
    <property type="chains" value="A=1-504"/>
</dbReference>
<dbReference type="PDBsum" id="6Z6D"/>
<dbReference type="SMR" id="Q9MCT1"/>
<dbReference type="GeneID" id="1262528"/>
<dbReference type="KEGG" id="vg:1262528"/>
<dbReference type="Proteomes" id="UP000002576">
    <property type="component" value="Genome"/>
</dbReference>
<dbReference type="GO" id="GO:0004519">
    <property type="term" value="F:endonuclease activity"/>
    <property type="evidence" value="ECO:0007669"/>
    <property type="project" value="InterPro"/>
</dbReference>
<dbReference type="Gene3D" id="3.40.50.300">
    <property type="entry name" value="P-loop containing nucleotide triphosphate hydrolases"/>
    <property type="match status" value="1"/>
</dbReference>
<dbReference type="InterPro" id="IPR027417">
    <property type="entry name" value="P-loop_NTPase"/>
</dbReference>
<dbReference type="InterPro" id="IPR046461">
    <property type="entry name" value="TerL_ATPase"/>
</dbReference>
<dbReference type="InterPro" id="IPR046462">
    <property type="entry name" value="TerL_nuclease"/>
</dbReference>
<dbReference type="InterPro" id="IPR005021">
    <property type="entry name" value="Terminase_largesu-like"/>
</dbReference>
<dbReference type="PANTHER" id="PTHR41287">
    <property type="match status" value="1"/>
</dbReference>
<dbReference type="PANTHER" id="PTHR41287:SF1">
    <property type="entry name" value="PROTEIN YMFN"/>
    <property type="match status" value="1"/>
</dbReference>
<dbReference type="Pfam" id="PF03354">
    <property type="entry name" value="TerL_ATPase"/>
    <property type="match status" value="1"/>
</dbReference>
<dbReference type="Pfam" id="PF20441">
    <property type="entry name" value="TerL_nuclease"/>
    <property type="match status" value="1"/>
</dbReference>
<protein>
    <recommendedName>
        <fullName>Terminase, large subunit</fullName>
    </recommendedName>
    <alternativeName>
        <fullName>DNA-packaging protein gp2</fullName>
    </alternativeName>
    <domain>
        <recommendedName>
            <fullName>Endonuclease</fullName>
            <ecNumber>3.1.21.-</ecNumber>
        </recommendedName>
    </domain>
    <domain>
        <recommendedName>
            <fullName>ATPase</fullName>
            <ecNumber>3.6.4.-</ecNumber>
        </recommendedName>
    </domain>
</protein>
<proteinExistence type="evidence at protein level"/>
<reference key="1">
    <citation type="journal article" date="2000" name="J. Mol. Biol.">
        <title>Genomic sequences of bacteriophages HK97 and HK022: pervasive genetic mosaicism in the lambdoid bacteriophages.</title>
        <authorList>
            <person name="Juhala R.J."/>
            <person name="Ford M.E."/>
            <person name="Duda R.L."/>
            <person name="Youlton A."/>
            <person name="Hatfull G.F."/>
            <person name="Hendrix R.W."/>
        </authorList>
    </citation>
    <scope>NUCLEOTIDE SEQUENCE [GENOMIC DNA]</scope>
</reference>
<reference key="2">
    <citation type="journal article" date="2024" name="Proc. Natl. Acad. Sci. U.S.A.">
        <title>Structural basis for DNA recognition by a viral genome-packaging machine.</title>
        <authorList>
            <person name="Chechik M."/>
            <person name="Greive S.J."/>
            <person name="Antson A.A."/>
            <person name="Jenkins H.T."/>
        </authorList>
    </citation>
    <scope>FUNCTION</scope>
</reference>
<reference key="3">
    <citation type="journal article" date="2023" name="Nucleic Acids Res.">
        <title>Insights into a viral motor: the structure of the HK97 packaging termination assembly.</title>
        <authorList>
            <person name="Hawkins D.E.D.P."/>
            <person name="Bayfield O.W."/>
            <person name="Fung H.K.H."/>
            <person name="Grba D.N."/>
            <person name="Huet A."/>
            <person name="Conway J.F."/>
            <person name="Antson A.A."/>
        </authorList>
    </citation>
    <scope>STRUCTURE BY ELECTRON MICROSCOPY (8.80 ANGSTROMS)</scope>
    <scope>SUBUNIT</scope>
    <scope>INTERACTION WITH THE TERMINASE SMALL SUBUNIT</scope>
    <scope>INTERACTION WITH THE PORTAL PROTEIN</scope>
</reference>
<reference evidence="6" key="4">
    <citation type="journal article" date="2022" name="Nucleic Acids Res.">
        <title>Structural basis of DNA packaging by a ring-type ATPase from an archetypal viral system.</title>
        <authorList>
            <person name="Fung H.K.H."/>
            <person name="Grimes S."/>
            <person name="Huet A."/>
            <person name="Duda R.L."/>
            <person name="Chechik M."/>
            <person name="Gault J."/>
            <person name="Robinson C.V."/>
            <person name="Hendrix R.W."/>
            <person name="Jardine P.J."/>
            <person name="Conway J.F."/>
            <person name="Baumann C.G."/>
            <person name="Antson A.A."/>
        </authorList>
    </citation>
    <scope>X-RAY CRYSTALLOGRAPHY (2.20 ANGSTROMS)</scope>
    <scope>COFACTOR</scope>
    <scope>SUBUNIT</scope>
    <scope>MUTAGENESIS OF ARG-56; LYS-57; LYS-60 AND ARG-154</scope>
    <scope>FUNCTION</scope>
    <scope>ACTIVITY REGULATION</scope>
</reference>
<comment type="function">
    <text evidence="2 4 5">The terminase large subunit acts as an ATP driven molecular motor necessary for viral DNA translocation into empty capsids and as an endonuclease that cuts the viral genome from the concetamer to initiate and to end a packaging reaction (PubMed:35947691). The terminase lies at a unique vertex of the procapsid and is composed of two subunits, a small terminase subunit involved in viral DNA recognition (packaging sequence), and a large terminase subunit possessing endonucleolytic and ATPase activities (PubMed:35947691). Both terminase subunits heterooligomerize and are docked on the portal protein to form the packaging machine (PubMed:39116131). Packaging initiates by TerS recognizing the packaging sequence in the viral DNA (PubMed:35947691). The nuclease activity of TerL cuts the viral DNA and the terminase-DNA complex binds to the portal of a procapsid shell (PubMed:35947691). DNA is translocated into the capsid, powered by the packaging ATPase in TerL, which continues until the next site is encountered at which point the motor stops and again cuts the DNA to release the nucleocapsid filled with a unit-length genome ('unit length' packaging) (Probable).</text>
</comment>
<comment type="cofactor">
    <cofactor evidence="2">
        <name>Mg(2+)</name>
        <dbReference type="ChEBI" id="CHEBI:18420"/>
    </cofactor>
    <cofactor evidence="2">
        <name>Mn(2+)</name>
        <dbReference type="ChEBI" id="CHEBI:29035"/>
    </cofactor>
</comment>
<comment type="activity regulation">
    <text evidence="2">Inhibited by zinc.</text>
</comment>
<comment type="subunit">
    <text evidence="2 3">Homopentamer; forms a ring-like structure through which genomic DNA is translocated into the capsid (PubMed:35947691, PubMed:37293963). Interacts with the terminase small subunit; the active complex is composed of a pentamer ring of terminase large subunits and a nonamer ring of terminase small subunits (PubMed:37293963). Interacts with the portal protein; this interaction allows the packaging of viral DNA (PubMed:37293963).</text>
</comment>
<comment type="domain">
    <text>The ATPase region is in the N-terminus, whereas the nuclease region is in the C-terminus.</text>
</comment>
<comment type="similarity">
    <text>Belongs to the Hendrixvirinae large terminase family.</text>
</comment>
<keyword id="KW-0002">3D-structure</keyword>
<keyword id="KW-0067">ATP-binding</keyword>
<keyword id="KW-0255">Endonuclease</keyword>
<keyword id="KW-0378">Hydrolase</keyword>
<keyword id="KW-0460">Magnesium</keyword>
<keyword id="KW-0479">Metal-binding</keyword>
<keyword id="KW-0540">Nuclease</keyword>
<keyword id="KW-0547">Nucleotide-binding</keyword>
<keyword id="KW-1185">Reference proteome</keyword>
<keyword id="KW-0231">Viral genome packaging</keyword>
<keyword id="KW-1188">Viral release from host cell</keyword>
<organismHost>
    <name type="scientific">Escherichia coli</name>
    <dbReference type="NCBI Taxonomy" id="562"/>
</organismHost>
<accession>Q9MCT1</accession>
<name>TERL_BPHK7</name>
<organism>
    <name type="scientific">Enterobacteria phage HK97</name>
    <name type="common">Bacteriophage HK97</name>
    <dbReference type="NCBI Taxonomy" id="2681617"/>
    <lineage>
        <taxon>Viruses</taxon>
        <taxon>Duplodnaviria</taxon>
        <taxon>Heunggongvirae</taxon>
        <taxon>Uroviricota</taxon>
        <taxon>Caudoviricetes</taxon>
        <taxon>Hendrixvirinae</taxon>
        <taxon>Byrnievirus</taxon>
        <taxon>Byrnievirus HK97</taxon>
    </lineage>
</organism>
<sequence length="504" mass="55198">MTRGERVIAFIERFCIVPEGKLIGQPMRLDPFQKDFILAVYDNPAGTDMAILSIARKNGKTGLIAGILLAHLVGPEAVQNTQIVSGALSREQAAIVFNLAVKMVNLNPKLQEIVHITPSGKKLIGLPCNVEYKALSAEGKTTHGLSPILAILDETGQVRGPQDDFIDAITTAQGAHENPLLIVISTQAANDADLLSIWIDDAVKSKDPHIVCHVYEAPKDADISKRESWLAANPALGTFRSEKDMARQAEKAGRMPSFENTFRNLNLNQRVSTVSPFISRSVWELCGEMPINTPRKWYAGLDLSARNDLTALVIAGEADDGVWDVFPFFWTPQKTLEERTKTDRAPYDVWVREGLLRTTPGASVDYSFVVADIAEIIGDFDLTSMAFDRWRIDQFRKDADAIGLSLPLVEFGQGFKDMGPAVDTLESLMLNGRVRHGMHPVLTMCAVNAVVVKDAAGNRKLDKSKATGRIDGMVAMTMSVGAANGEVTEQGGDFDDFIFRPLSM</sequence>
<gene>
    <name type="primary">2</name>
</gene>
<evidence type="ECO:0000250" key="1">
    <source>
        <dbReference type="UniProtKB" id="P03694"/>
    </source>
</evidence>
<evidence type="ECO:0000269" key="2">
    <source>
    </source>
</evidence>
<evidence type="ECO:0000269" key="3">
    <source>
    </source>
</evidence>
<evidence type="ECO:0000269" key="4">
    <source>
    </source>
</evidence>
<evidence type="ECO:0000305" key="5">
    <source>
    </source>
</evidence>
<evidence type="ECO:0007744" key="6">
    <source>
        <dbReference type="PDB" id="6Z6D"/>
    </source>
</evidence>